<name>PLSY_JANSC</name>
<reference key="1">
    <citation type="submission" date="2006-02" db="EMBL/GenBank/DDBJ databases">
        <title>Complete sequence of chromosome of Jannaschia sp. CCS1.</title>
        <authorList>
            <consortium name="US DOE Joint Genome Institute"/>
            <person name="Copeland A."/>
            <person name="Lucas S."/>
            <person name="Lapidus A."/>
            <person name="Barry K."/>
            <person name="Detter J.C."/>
            <person name="Glavina del Rio T."/>
            <person name="Hammon N."/>
            <person name="Israni S."/>
            <person name="Pitluck S."/>
            <person name="Brettin T."/>
            <person name="Bruce D."/>
            <person name="Han C."/>
            <person name="Tapia R."/>
            <person name="Gilna P."/>
            <person name="Chertkov O."/>
            <person name="Saunders E."/>
            <person name="Schmutz J."/>
            <person name="Larimer F."/>
            <person name="Land M."/>
            <person name="Kyrpides N."/>
            <person name="Lykidis A."/>
            <person name="Moran M.A."/>
            <person name="Belas R."/>
            <person name="Ye W."/>
            <person name="Buchan A."/>
            <person name="Gonzalez J.M."/>
            <person name="Schell M.A."/>
            <person name="Richardson P."/>
        </authorList>
    </citation>
    <scope>NUCLEOTIDE SEQUENCE [LARGE SCALE GENOMIC DNA]</scope>
    <source>
        <strain>CCS1</strain>
    </source>
</reference>
<evidence type="ECO:0000255" key="1">
    <source>
        <dbReference type="HAMAP-Rule" id="MF_01043"/>
    </source>
</evidence>
<organism>
    <name type="scientific">Jannaschia sp. (strain CCS1)</name>
    <dbReference type="NCBI Taxonomy" id="290400"/>
    <lineage>
        <taxon>Bacteria</taxon>
        <taxon>Pseudomonadati</taxon>
        <taxon>Pseudomonadota</taxon>
        <taxon>Alphaproteobacteria</taxon>
        <taxon>Rhodobacterales</taxon>
        <taxon>Roseobacteraceae</taxon>
        <taxon>Jannaschia</taxon>
    </lineage>
</organism>
<accession>Q28KD9</accession>
<gene>
    <name evidence="1" type="primary">plsY</name>
    <name type="ordered locus">Jann_3906</name>
</gene>
<comment type="function">
    <text evidence="1">Catalyzes the transfer of an acyl group from acyl-phosphate (acyl-PO(4)) to glycerol-3-phosphate (G3P) to form lysophosphatidic acid (LPA). This enzyme utilizes acyl-phosphate as fatty acyl donor, but not acyl-CoA or acyl-ACP.</text>
</comment>
<comment type="catalytic activity">
    <reaction evidence="1">
        <text>an acyl phosphate + sn-glycerol 3-phosphate = a 1-acyl-sn-glycero-3-phosphate + phosphate</text>
        <dbReference type="Rhea" id="RHEA:34075"/>
        <dbReference type="ChEBI" id="CHEBI:43474"/>
        <dbReference type="ChEBI" id="CHEBI:57597"/>
        <dbReference type="ChEBI" id="CHEBI:57970"/>
        <dbReference type="ChEBI" id="CHEBI:59918"/>
        <dbReference type="EC" id="2.3.1.275"/>
    </reaction>
</comment>
<comment type="pathway">
    <text evidence="1">Lipid metabolism; phospholipid metabolism.</text>
</comment>
<comment type="subunit">
    <text evidence="1">Probably interacts with PlsX.</text>
</comment>
<comment type="subcellular location">
    <subcellularLocation>
        <location evidence="1">Cell inner membrane</location>
        <topology evidence="1">Multi-pass membrane protein</topology>
    </subcellularLocation>
</comment>
<comment type="similarity">
    <text evidence="1">Belongs to the PlsY family.</text>
</comment>
<dbReference type="EC" id="2.3.1.275" evidence="1"/>
<dbReference type="EMBL" id="CP000264">
    <property type="protein sequence ID" value="ABD56823.1"/>
    <property type="molecule type" value="Genomic_DNA"/>
</dbReference>
<dbReference type="SMR" id="Q28KD9"/>
<dbReference type="STRING" id="290400.Jann_3906"/>
<dbReference type="KEGG" id="jan:Jann_3906"/>
<dbReference type="eggNOG" id="COG0344">
    <property type="taxonomic scope" value="Bacteria"/>
</dbReference>
<dbReference type="HOGENOM" id="CLU_081254_1_0_5"/>
<dbReference type="OrthoDB" id="9777124at2"/>
<dbReference type="UniPathway" id="UPA00085"/>
<dbReference type="Proteomes" id="UP000008326">
    <property type="component" value="Chromosome"/>
</dbReference>
<dbReference type="GO" id="GO:0005886">
    <property type="term" value="C:plasma membrane"/>
    <property type="evidence" value="ECO:0007669"/>
    <property type="project" value="UniProtKB-SubCell"/>
</dbReference>
<dbReference type="GO" id="GO:0043772">
    <property type="term" value="F:acyl-phosphate glycerol-3-phosphate acyltransferase activity"/>
    <property type="evidence" value="ECO:0007669"/>
    <property type="project" value="UniProtKB-UniRule"/>
</dbReference>
<dbReference type="GO" id="GO:0008654">
    <property type="term" value="P:phospholipid biosynthetic process"/>
    <property type="evidence" value="ECO:0007669"/>
    <property type="project" value="UniProtKB-UniRule"/>
</dbReference>
<dbReference type="HAMAP" id="MF_01043">
    <property type="entry name" value="PlsY"/>
    <property type="match status" value="1"/>
</dbReference>
<dbReference type="InterPro" id="IPR003811">
    <property type="entry name" value="G3P_acylTferase_PlsY"/>
</dbReference>
<dbReference type="NCBIfam" id="TIGR00023">
    <property type="entry name" value="glycerol-3-phosphate 1-O-acyltransferase PlsY"/>
    <property type="match status" value="1"/>
</dbReference>
<dbReference type="PANTHER" id="PTHR30309:SF0">
    <property type="entry name" value="GLYCEROL-3-PHOSPHATE ACYLTRANSFERASE-RELATED"/>
    <property type="match status" value="1"/>
</dbReference>
<dbReference type="PANTHER" id="PTHR30309">
    <property type="entry name" value="INNER MEMBRANE PROTEIN YGIH"/>
    <property type="match status" value="1"/>
</dbReference>
<dbReference type="Pfam" id="PF02660">
    <property type="entry name" value="G3P_acyltransf"/>
    <property type="match status" value="1"/>
</dbReference>
<dbReference type="SMART" id="SM01207">
    <property type="entry name" value="G3P_acyltransf"/>
    <property type="match status" value="1"/>
</dbReference>
<protein>
    <recommendedName>
        <fullName evidence="1">Glycerol-3-phosphate acyltransferase</fullName>
    </recommendedName>
    <alternativeName>
        <fullName evidence="1">Acyl-PO4 G3P acyltransferase</fullName>
    </alternativeName>
    <alternativeName>
        <fullName evidence="1">Acyl-phosphate--glycerol-3-phosphate acyltransferase</fullName>
    </alternativeName>
    <alternativeName>
        <fullName evidence="1">G3P acyltransferase</fullName>
        <shortName evidence="1">GPAT</shortName>
        <ecNumber evidence="1">2.3.1.275</ecNumber>
    </alternativeName>
    <alternativeName>
        <fullName evidence="1">Lysophosphatidic acid synthase</fullName>
        <shortName evidence="1">LPA synthase</shortName>
    </alternativeName>
</protein>
<keyword id="KW-0997">Cell inner membrane</keyword>
<keyword id="KW-1003">Cell membrane</keyword>
<keyword id="KW-0444">Lipid biosynthesis</keyword>
<keyword id="KW-0443">Lipid metabolism</keyword>
<keyword id="KW-0472">Membrane</keyword>
<keyword id="KW-0594">Phospholipid biosynthesis</keyword>
<keyword id="KW-1208">Phospholipid metabolism</keyword>
<keyword id="KW-1185">Reference proteome</keyword>
<keyword id="KW-0808">Transferase</keyword>
<keyword id="KW-0812">Transmembrane</keyword>
<keyword id="KW-1133">Transmembrane helix</keyword>
<sequence length="203" mass="20683">MIPLIETSALLLGLTALLAYLLGSVPFGIMMARLFGLGDLRSVGSGNIGATNVLRTGNKLAAFLTLVLDAGKGAIAVFLARALLGEDAAQLAGFAAFLGHCFPVFLGFKGGKGVATFLGTLLALAWPIGLAACAIWAITAAVFRMSSLAALVAAALSPLAAFTLGLPSAVVFCAALATLIFLRHRGNISRIAKGQEPKIGKTS</sequence>
<feature type="chain" id="PRO_0000250306" description="Glycerol-3-phosphate acyltransferase">
    <location>
        <begin position="1"/>
        <end position="203"/>
    </location>
</feature>
<feature type="transmembrane region" description="Helical" evidence="1">
    <location>
        <begin position="10"/>
        <end position="30"/>
    </location>
</feature>
<feature type="transmembrane region" description="Helical" evidence="1">
    <location>
        <begin position="60"/>
        <end position="80"/>
    </location>
</feature>
<feature type="transmembrane region" description="Helical" evidence="1">
    <location>
        <begin position="88"/>
        <end position="108"/>
    </location>
</feature>
<feature type="transmembrane region" description="Helical" evidence="1">
    <location>
        <begin position="118"/>
        <end position="138"/>
    </location>
</feature>
<feature type="transmembrane region" description="Helical" evidence="1">
    <location>
        <begin position="162"/>
        <end position="182"/>
    </location>
</feature>
<proteinExistence type="inferred from homology"/>